<name>MINE_SYNS9</name>
<reference key="1">
    <citation type="submission" date="2005-08" db="EMBL/GenBank/DDBJ databases">
        <title>Complete sequence of Synechococcus sp. CC9902.</title>
        <authorList>
            <person name="Copeland A."/>
            <person name="Lucas S."/>
            <person name="Lapidus A."/>
            <person name="Barry K."/>
            <person name="Detter J.C."/>
            <person name="Glavina T."/>
            <person name="Hammon N."/>
            <person name="Israni S."/>
            <person name="Pitluck S."/>
            <person name="Martinez M."/>
            <person name="Schmutz J."/>
            <person name="Larimer F."/>
            <person name="Land M."/>
            <person name="Kyrpides N."/>
            <person name="Ivanova N."/>
            <person name="Richardson P."/>
        </authorList>
    </citation>
    <scope>NUCLEOTIDE SEQUENCE [LARGE SCALE GENOMIC DNA]</scope>
    <source>
        <strain>CC9902</strain>
    </source>
</reference>
<proteinExistence type="inferred from homology"/>
<keyword id="KW-0131">Cell cycle</keyword>
<keyword id="KW-0132">Cell division</keyword>
<keyword id="KW-1185">Reference proteome</keyword>
<evidence type="ECO:0000255" key="1">
    <source>
        <dbReference type="HAMAP-Rule" id="MF_00262"/>
    </source>
</evidence>
<accession>Q3AUX8</accession>
<dbReference type="EMBL" id="CP000097">
    <property type="protein sequence ID" value="ABB26811.1"/>
    <property type="molecule type" value="Genomic_DNA"/>
</dbReference>
<dbReference type="RefSeq" id="WP_011360614.1">
    <property type="nucleotide sequence ID" value="NC_007513.1"/>
</dbReference>
<dbReference type="SMR" id="Q3AUX8"/>
<dbReference type="STRING" id="316279.Syncc9902_1854"/>
<dbReference type="KEGG" id="sye:Syncc9902_1854"/>
<dbReference type="eggNOG" id="COG0851">
    <property type="taxonomic scope" value="Bacteria"/>
</dbReference>
<dbReference type="HOGENOM" id="CLU_137929_1_1_3"/>
<dbReference type="OrthoDB" id="9796578at2"/>
<dbReference type="Proteomes" id="UP000002712">
    <property type="component" value="Chromosome"/>
</dbReference>
<dbReference type="GO" id="GO:0051301">
    <property type="term" value="P:cell division"/>
    <property type="evidence" value="ECO:0007669"/>
    <property type="project" value="UniProtKB-KW"/>
</dbReference>
<dbReference type="GO" id="GO:0032955">
    <property type="term" value="P:regulation of division septum assembly"/>
    <property type="evidence" value="ECO:0007669"/>
    <property type="project" value="InterPro"/>
</dbReference>
<dbReference type="Gene3D" id="3.30.1070.10">
    <property type="entry name" value="Cell division topological specificity factor MinE"/>
    <property type="match status" value="1"/>
</dbReference>
<dbReference type="HAMAP" id="MF_00262">
    <property type="entry name" value="MinE"/>
    <property type="match status" value="1"/>
</dbReference>
<dbReference type="InterPro" id="IPR005527">
    <property type="entry name" value="MinE"/>
</dbReference>
<dbReference type="InterPro" id="IPR036707">
    <property type="entry name" value="MinE_sf"/>
</dbReference>
<dbReference type="NCBIfam" id="TIGR01215">
    <property type="entry name" value="minE"/>
    <property type="match status" value="1"/>
</dbReference>
<dbReference type="NCBIfam" id="NF001422">
    <property type="entry name" value="PRK00296.1"/>
    <property type="match status" value="1"/>
</dbReference>
<dbReference type="Pfam" id="PF03776">
    <property type="entry name" value="MinE"/>
    <property type="match status" value="1"/>
</dbReference>
<dbReference type="SUPFAM" id="SSF55229">
    <property type="entry name" value="Cell division protein MinE topological specificity domain"/>
    <property type="match status" value="1"/>
</dbReference>
<organism>
    <name type="scientific">Synechococcus sp. (strain CC9902)</name>
    <dbReference type="NCBI Taxonomy" id="316279"/>
    <lineage>
        <taxon>Bacteria</taxon>
        <taxon>Bacillati</taxon>
        <taxon>Cyanobacteriota</taxon>
        <taxon>Cyanophyceae</taxon>
        <taxon>Synechococcales</taxon>
        <taxon>Synechococcaceae</taxon>
        <taxon>Synechococcus</taxon>
    </lineage>
</organism>
<feature type="chain" id="PRO_0000298199" description="Cell division topological specificity factor">
    <location>
        <begin position="1"/>
        <end position="95"/>
    </location>
</feature>
<comment type="function">
    <text evidence="1">Prevents the cell division inhibition by proteins MinC and MinD at internal division sites while permitting inhibition at polar sites. This ensures cell division at the proper site by restricting the formation of a division septum at the midpoint of the long axis of the cell.</text>
</comment>
<comment type="similarity">
    <text evidence="1">Belongs to the MinE family.</text>
</comment>
<gene>
    <name evidence="1" type="primary">minE</name>
    <name type="ordered locus">Syncc9902_1854</name>
</gene>
<protein>
    <recommendedName>
        <fullName evidence="1">Cell division topological specificity factor</fullName>
    </recommendedName>
</protein>
<sequence length="95" mass="10676">MTVKDFIDKLLGRQTSSASTAKQRLQLVLAHDRSDLNPELLAQMRREILEVVARYVEIDIEEGDVSLETEDRMTALVANLPIRRSIQQSPNGGTL</sequence>